<proteinExistence type="inferred from homology"/>
<evidence type="ECO:0000255" key="1">
    <source>
        <dbReference type="HAMAP-Rule" id="MF_01859"/>
    </source>
</evidence>
<sequence>MSHLDNGFRSLTLQRFPATDDVNPLQAWEAADEYLLQQLDDTEIRGPVLILNDAFGALSCALAEHKPYSIGDSYISELATRENLRLNGIDESSVKFLDSTADYPQQPGVVLIKVPKTLALLEQQLRALRKVVTSDTRIIAGAKARDIHTSTLELFEKVLGPTTTTLAWKKARLINCTFNEPQLADAPQTVSWKLEGTDWTIHNHANVFSRTGLDIGARFFMQHLPENLEGEIVDLGCGNGVIGLTLLDKNPQAKVVFVDESPMAVASSRLNVETNMPEALDRCEFMINNALSGVEPFRFNAVLCNPPFHQQHALTDNVAWEMFHHARRCLKINGELYIVANRHLDYFHKLKKIFGNCTTIATNNKFVVLKAVKLGRRR</sequence>
<dbReference type="EC" id="2.1.1.174" evidence="1"/>
<dbReference type="EMBL" id="CP000948">
    <property type="protein sequence ID" value="ACB04168.1"/>
    <property type="molecule type" value="Genomic_DNA"/>
</dbReference>
<dbReference type="RefSeq" id="WP_000018695.1">
    <property type="nucleotide sequence ID" value="NC_010473.1"/>
</dbReference>
<dbReference type="SMR" id="B1XG88"/>
<dbReference type="KEGG" id="ecd:ECDH10B_3259"/>
<dbReference type="HOGENOM" id="CLU_040288_4_0_6"/>
<dbReference type="GO" id="GO:0005737">
    <property type="term" value="C:cytoplasm"/>
    <property type="evidence" value="ECO:0007669"/>
    <property type="project" value="UniProtKB-SubCell"/>
</dbReference>
<dbReference type="GO" id="GO:0052916">
    <property type="term" value="F:23S rRNA (guanine(1835)-N(2))-methyltransferase activity"/>
    <property type="evidence" value="ECO:0007669"/>
    <property type="project" value="UniProtKB-EC"/>
</dbReference>
<dbReference type="GO" id="GO:0003676">
    <property type="term" value="F:nucleic acid binding"/>
    <property type="evidence" value="ECO:0007669"/>
    <property type="project" value="InterPro"/>
</dbReference>
<dbReference type="CDD" id="cd02440">
    <property type="entry name" value="AdoMet_MTases"/>
    <property type="match status" value="1"/>
</dbReference>
<dbReference type="FunFam" id="3.40.50.150:FF:000046">
    <property type="entry name" value="Ribosomal RNA large subunit methyltransferase G"/>
    <property type="match status" value="1"/>
</dbReference>
<dbReference type="FunFam" id="3.40.50.150:FF:000047">
    <property type="entry name" value="Ribosomal RNA large subunit methyltransferase G"/>
    <property type="match status" value="1"/>
</dbReference>
<dbReference type="Gene3D" id="3.40.50.150">
    <property type="entry name" value="Vaccinia Virus protein VP39"/>
    <property type="match status" value="2"/>
</dbReference>
<dbReference type="HAMAP" id="MF_01859">
    <property type="entry name" value="23SrRNA_methyltr_G"/>
    <property type="match status" value="1"/>
</dbReference>
<dbReference type="InterPro" id="IPR002052">
    <property type="entry name" value="DNA_methylase_N6_adenine_CS"/>
</dbReference>
<dbReference type="InterPro" id="IPR017237">
    <property type="entry name" value="rRNA_m2G-MeTrfase_RlmG"/>
</dbReference>
<dbReference type="InterPro" id="IPR046977">
    <property type="entry name" value="RsmC/RlmG"/>
</dbReference>
<dbReference type="InterPro" id="IPR029063">
    <property type="entry name" value="SAM-dependent_MTases_sf"/>
</dbReference>
<dbReference type="InterPro" id="IPR007848">
    <property type="entry name" value="Small_mtfrase_dom"/>
</dbReference>
<dbReference type="NCBIfam" id="NF011577">
    <property type="entry name" value="PRK15001.1"/>
    <property type="match status" value="1"/>
</dbReference>
<dbReference type="PANTHER" id="PTHR47816:SF5">
    <property type="entry name" value="RIBOSOMAL RNA LARGE SUBUNIT METHYLTRANSFERASE G"/>
    <property type="match status" value="1"/>
</dbReference>
<dbReference type="PANTHER" id="PTHR47816">
    <property type="entry name" value="RIBOSOMAL RNA SMALL SUBUNIT METHYLTRANSFERASE C"/>
    <property type="match status" value="1"/>
</dbReference>
<dbReference type="Pfam" id="PF05175">
    <property type="entry name" value="MTS"/>
    <property type="match status" value="1"/>
</dbReference>
<dbReference type="PIRSF" id="PIRSF037565">
    <property type="entry name" value="RRNA_m2G_Mtase_RsmD_prd"/>
    <property type="match status" value="1"/>
</dbReference>
<dbReference type="SUPFAM" id="SSF53335">
    <property type="entry name" value="S-adenosyl-L-methionine-dependent methyltransferases"/>
    <property type="match status" value="1"/>
</dbReference>
<feature type="chain" id="PRO_0000366456" description="Ribosomal RNA large subunit methyltransferase G">
    <location>
        <begin position="1"/>
        <end position="378"/>
    </location>
</feature>
<comment type="function">
    <text evidence="1">Specifically methylates the guanine in position 1835 (m2G1835) of 23S rRNA.</text>
</comment>
<comment type="catalytic activity">
    <reaction evidence="1">
        <text>guanosine(1835) in 23S rRNA + S-adenosyl-L-methionine = N(2)-methylguanosine(1835) in 23S rRNA + S-adenosyl-L-homocysteine + H(+)</text>
        <dbReference type="Rhea" id="RHEA:42744"/>
        <dbReference type="Rhea" id="RHEA-COMP:10217"/>
        <dbReference type="Rhea" id="RHEA-COMP:10218"/>
        <dbReference type="ChEBI" id="CHEBI:15378"/>
        <dbReference type="ChEBI" id="CHEBI:57856"/>
        <dbReference type="ChEBI" id="CHEBI:59789"/>
        <dbReference type="ChEBI" id="CHEBI:74269"/>
        <dbReference type="ChEBI" id="CHEBI:74481"/>
        <dbReference type="EC" id="2.1.1.174"/>
    </reaction>
</comment>
<comment type="subcellular location">
    <subcellularLocation>
        <location evidence="1">Cytoplasm</location>
    </subcellularLocation>
</comment>
<comment type="similarity">
    <text evidence="1">Belongs to the methyltransferase superfamily. RlmG family.</text>
</comment>
<gene>
    <name evidence="1" type="primary">rlmG</name>
    <name type="ordered locus">ECDH10B_3259</name>
</gene>
<keyword id="KW-0963">Cytoplasm</keyword>
<keyword id="KW-0489">Methyltransferase</keyword>
<keyword id="KW-0698">rRNA processing</keyword>
<keyword id="KW-0949">S-adenosyl-L-methionine</keyword>
<keyword id="KW-0808">Transferase</keyword>
<reference key="1">
    <citation type="journal article" date="2008" name="J. Bacteriol.">
        <title>The complete genome sequence of Escherichia coli DH10B: insights into the biology of a laboratory workhorse.</title>
        <authorList>
            <person name="Durfee T."/>
            <person name="Nelson R."/>
            <person name="Baldwin S."/>
            <person name="Plunkett G. III"/>
            <person name="Burland V."/>
            <person name="Mau B."/>
            <person name="Petrosino J.F."/>
            <person name="Qin X."/>
            <person name="Muzny D.M."/>
            <person name="Ayele M."/>
            <person name="Gibbs R.A."/>
            <person name="Csorgo B."/>
            <person name="Posfai G."/>
            <person name="Weinstock G.M."/>
            <person name="Blattner F.R."/>
        </authorList>
    </citation>
    <scope>NUCLEOTIDE SEQUENCE [LARGE SCALE GENOMIC DNA]</scope>
    <source>
        <strain>K12 / DH10B</strain>
    </source>
</reference>
<protein>
    <recommendedName>
        <fullName evidence="1">Ribosomal RNA large subunit methyltransferase G</fullName>
        <ecNumber evidence="1">2.1.1.174</ecNumber>
    </recommendedName>
    <alternativeName>
        <fullName evidence="1">23S rRNA m2G1835 methyltransferase</fullName>
    </alternativeName>
    <alternativeName>
        <fullName evidence="1">rRNA (guanine-N(2)-)-methyltransferase RlmG</fullName>
    </alternativeName>
</protein>
<name>RLMG_ECODH</name>
<organism>
    <name type="scientific">Escherichia coli (strain K12 / DH10B)</name>
    <dbReference type="NCBI Taxonomy" id="316385"/>
    <lineage>
        <taxon>Bacteria</taxon>
        <taxon>Pseudomonadati</taxon>
        <taxon>Pseudomonadota</taxon>
        <taxon>Gammaproteobacteria</taxon>
        <taxon>Enterobacterales</taxon>
        <taxon>Enterobacteriaceae</taxon>
        <taxon>Escherichia</taxon>
    </lineage>
</organism>
<accession>B1XG88</accession>